<keyword id="KW-0025">Alternative splicing</keyword>
<keyword id="KW-0175">Coiled coil</keyword>
<keyword id="KW-1267">Proteomics identification</keyword>
<keyword id="KW-1185">Reference proteome</keyword>
<dbReference type="EMBL" id="AK097512">
    <property type="protein sequence ID" value="BAC05082.1"/>
    <property type="status" value="ALT_SEQ"/>
    <property type="molecule type" value="mRNA"/>
</dbReference>
<dbReference type="EMBL" id="AC018758">
    <property type="status" value="NOT_ANNOTATED_CDS"/>
    <property type="molecule type" value="Genomic_DNA"/>
</dbReference>
<dbReference type="EMBL" id="BC070094">
    <property type="protein sequence ID" value="AAH70094.1"/>
    <property type="molecule type" value="mRNA"/>
</dbReference>
<dbReference type="CCDS" id="CCDS12621.2">
    <molecule id="Q6NSJ2-1"/>
</dbReference>
<dbReference type="RefSeq" id="NP_942147.3">
    <molecule id="Q6NSJ2-1"/>
    <property type="nucleotide sequence ID" value="NM_198850.3"/>
</dbReference>
<dbReference type="SMR" id="Q6NSJ2"/>
<dbReference type="BioGRID" id="575902">
    <property type="interactions" value="88"/>
</dbReference>
<dbReference type="FunCoup" id="Q6NSJ2">
    <property type="interactions" value="742"/>
</dbReference>
<dbReference type="IntAct" id="Q6NSJ2">
    <property type="interactions" value="46"/>
</dbReference>
<dbReference type="MINT" id="Q6NSJ2"/>
<dbReference type="STRING" id="9606.ENSP00000292140"/>
<dbReference type="GlyGen" id="Q6NSJ2">
    <property type="glycosylation" value="3 sites"/>
</dbReference>
<dbReference type="iPTMnet" id="Q6NSJ2"/>
<dbReference type="PhosphoSitePlus" id="Q6NSJ2"/>
<dbReference type="BioMuta" id="PHLDB3"/>
<dbReference type="DMDM" id="311033417"/>
<dbReference type="jPOST" id="Q6NSJ2"/>
<dbReference type="MassIVE" id="Q6NSJ2"/>
<dbReference type="PaxDb" id="9606-ENSP00000292140"/>
<dbReference type="PeptideAtlas" id="Q6NSJ2"/>
<dbReference type="ProteomicsDB" id="66637">
    <molecule id="Q6NSJ2-1"/>
</dbReference>
<dbReference type="ProteomicsDB" id="66638">
    <molecule id="Q6NSJ2-2"/>
</dbReference>
<dbReference type="Pumba" id="Q6NSJ2"/>
<dbReference type="Antibodypedia" id="48957">
    <property type="antibodies" value="9 antibodies from 8 providers"/>
</dbReference>
<dbReference type="DNASU" id="653583"/>
<dbReference type="Ensembl" id="ENST00000292140.10">
    <molecule id="Q6NSJ2-1"/>
    <property type="protein sequence ID" value="ENSP00000292140.5"/>
    <property type="gene ID" value="ENSG00000176531.12"/>
</dbReference>
<dbReference type="Ensembl" id="ENST00000599242.1">
    <molecule id="Q6NSJ2-2"/>
    <property type="protein sequence ID" value="ENSP00000471158.1"/>
    <property type="gene ID" value="ENSG00000176531.12"/>
</dbReference>
<dbReference type="GeneID" id="653583"/>
<dbReference type="KEGG" id="hsa:653583"/>
<dbReference type="MANE-Select" id="ENST00000292140.10">
    <property type="protein sequence ID" value="ENSP00000292140.5"/>
    <property type="RefSeq nucleotide sequence ID" value="NM_198850.4"/>
    <property type="RefSeq protein sequence ID" value="NP_942147.3"/>
</dbReference>
<dbReference type="UCSC" id="uc002own.5">
    <molecule id="Q6NSJ2-1"/>
    <property type="organism name" value="human"/>
</dbReference>
<dbReference type="AGR" id="HGNC:30499"/>
<dbReference type="CTD" id="653583"/>
<dbReference type="DisGeNET" id="653583"/>
<dbReference type="GeneCards" id="PHLDB3"/>
<dbReference type="HGNC" id="HGNC:30499">
    <property type="gene designation" value="PHLDB3"/>
</dbReference>
<dbReference type="HPA" id="ENSG00000176531">
    <property type="expression patterns" value="Tissue enhanced (esophagus, skin)"/>
</dbReference>
<dbReference type="MIM" id="621041">
    <property type="type" value="gene"/>
</dbReference>
<dbReference type="neXtProt" id="NX_Q6NSJ2"/>
<dbReference type="OpenTargets" id="ENSG00000176531"/>
<dbReference type="VEuPathDB" id="HostDB:ENSG00000176531"/>
<dbReference type="eggNOG" id="ENOG502RF6E">
    <property type="taxonomic scope" value="Eukaryota"/>
</dbReference>
<dbReference type="GeneTree" id="ENSGT00940000160803"/>
<dbReference type="HOGENOM" id="CLU_028602_0_0_1"/>
<dbReference type="InParanoid" id="Q6NSJ2"/>
<dbReference type="OMA" id="MGTRSRP"/>
<dbReference type="OrthoDB" id="6020705at2759"/>
<dbReference type="PAN-GO" id="Q6NSJ2">
    <property type="GO annotations" value="0 GO annotations based on evolutionary models"/>
</dbReference>
<dbReference type="PhylomeDB" id="Q6NSJ2"/>
<dbReference type="TreeFam" id="TF338037"/>
<dbReference type="PathwayCommons" id="Q6NSJ2"/>
<dbReference type="SignaLink" id="Q6NSJ2"/>
<dbReference type="BioGRID-ORCS" id="653583">
    <property type="hits" value="24 hits in 1151 CRISPR screens"/>
</dbReference>
<dbReference type="ChiTaRS" id="PHLDB3">
    <property type="organism name" value="human"/>
</dbReference>
<dbReference type="GenomeRNAi" id="653583"/>
<dbReference type="Pharos" id="Q6NSJ2">
    <property type="development level" value="Tdark"/>
</dbReference>
<dbReference type="PRO" id="PR:Q6NSJ2"/>
<dbReference type="Proteomes" id="UP000005640">
    <property type="component" value="Chromosome 19"/>
</dbReference>
<dbReference type="RNAct" id="Q6NSJ2">
    <property type="molecule type" value="protein"/>
</dbReference>
<dbReference type="Bgee" id="ENSG00000176531">
    <property type="expression patterns" value="Expressed in lower esophagus mucosa and 119 other cell types or tissues"/>
</dbReference>
<dbReference type="ExpressionAtlas" id="Q6NSJ2">
    <property type="expression patterns" value="baseline and differential"/>
</dbReference>
<dbReference type="GO" id="GO:0019899">
    <property type="term" value="F:enzyme binding"/>
    <property type="evidence" value="ECO:0000353"/>
    <property type="project" value="UniProtKB"/>
</dbReference>
<dbReference type="CDD" id="cd14673">
    <property type="entry name" value="PH_PHLDB1_2"/>
    <property type="match status" value="1"/>
</dbReference>
<dbReference type="FunFam" id="2.30.29.30:FF:000006">
    <property type="entry name" value="Pleckstrin homology like domain family B member 1"/>
    <property type="match status" value="1"/>
</dbReference>
<dbReference type="Gene3D" id="2.30.29.30">
    <property type="entry name" value="Pleckstrin-homology domain (PH domain)/Phosphotyrosine-binding domain (PTB)"/>
    <property type="match status" value="1"/>
</dbReference>
<dbReference type="InterPro" id="IPR011993">
    <property type="entry name" value="PH-like_dom_sf"/>
</dbReference>
<dbReference type="InterPro" id="IPR052212">
    <property type="entry name" value="PH-like_domain"/>
</dbReference>
<dbReference type="InterPro" id="IPR001849">
    <property type="entry name" value="PH_domain"/>
</dbReference>
<dbReference type="InterPro" id="IPR037810">
    <property type="entry name" value="PHLDB1/2/3_PH"/>
</dbReference>
<dbReference type="PANTHER" id="PTHR12156:SF22">
    <property type="entry name" value="PLECKSTRIN HOMOLOGY-LIKE DOMAIN FAMILY B MEMBER 3"/>
    <property type="match status" value="1"/>
</dbReference>
<dbReference type="PANTHER" id="PTHR12156">
    <property type="entry name" value="PLECKSTRIN HOMOLOGY-LIKE DOMAIN, FAMILY B, MEMBER 3"/>
    <property type="match status" value="1"/>
</dbReference>
<dbReference type="Pfam" id="PF00169">
    <property type="entry name" value="PH"/>
    <property type="match status" value="1"/>
</dbReference>
<dbReference type="SMART" id="SM00233">
    <property type="entry name" value="PH"/>
    <property type="match status" value="1"/>
</dbReference>
<dbReference type="SUPFAM" id="SSF50729">
    <property type="entry name" value="PH domain-like"/>
    <property type="match status" value="1"/>
</dbReference>
<dbReference type="PROSITE" id="PS50003">
    <property type="entry name" value="PH_DOMAIN"/>
    <property type="match status" value="1"/>
</dbReference>
<proteinExistence type="evidence at protein level"/>
<evidence type="ECO:0000250" key="1"/>
<evidence type="ECO:0000255" key="2"/>
<evidence type="ECO:0000255" key="3">
    <source>
        <dbReference type="PROSITE-ProRule" id="PRU00145"/>
    </source>
</evidence>
<evidence type="ECO:0000256" key="4">
    <source>
        <dbReference type="SAM" id="MobiDB-lite"/>
    </source>
</evidence>
<evidence type="ECO:0000269" key="5">
    <source>
    </source>
</evidence>
<evidence type="ECO:0000303" key="6">
    <source>
    </source>
</evidence>
<evidence type="ECO:0000303" key="7">
    <source>
    </source>
</evidence>
<evidence type="ECO:0000305" key="8"/>
<accession>Q6NSJ2</accession>
<accession>Q8N7Z4</accession>
<sequence>MGTRSSPEEGTPPPLVPECDVEVQPQGHPEESREQEASEVLAEPSSRGGAEQQAEEEEVGEGSSTESSRDAPEATPPIAMAATPPASTSSREGVRGAARRLQGQQLEALTRVALMEQRVKELQRQRKELRIEMEVEVALLRGELAGERVAARREEEQLRELLEQQAASEQRGRQQREQEQRRLSQERDRLEGLRQRLRKAQGQLDSQPEDQRERLLQGVQEMREQLDVAQRAYEDLEFQQLERESRQEEEDRDSPGPQVPDPKVQELQASMAQHRRGALQHRIRVLEEQLKSLGEQMAAESRGLSRKKEEALQALSQERSRLLELNCLQGTPGGDFSEPNPALTKLLFTQKTDRQLLVLQDAVAHSAATPTSSCLFSVHSSLQGSIGLQRTGSLPRKRGERGSQRGSPRPLSFHCTESLEASALPPAVGDSGRYPLYQLLNCGRGNSCGAIHPDIAHMERLLQQAMAERERLLKAREGTRRGTEGSSGPAVPAITAPPTPPHPPGPRILDLRQHLEGWGHNPENCPHVQVSGCCCRGPLVKMGGRIKTWRKRWFCFDRQARRLAYYADKEETKLKGVIYFQAIEEVYYDHLRCAFKSPNPRLTFCVKTYERLFYMVAPSPEAMRIWMDVIVTAADENHAP</sequence>
<reference key="1">
    <citation type="journal article" date="2004" name="Nat. Genet.">
        <title>Complete sequencing and characterization of 21,243 full-length human cDNAs.</title>
        <authorList>
            <person name="Ota T."/>
            <person name="Suzuki Y."/>
            <person name="Nishikawa T."/>
            <person name="Otsuki T."/>
            <person name="Sugiyama T."/>
            <person name="Irie R."/>
            <person name="Wakamatsu A."/>
            <person name="Hayashi K."/>
            <person name="Sato H."/>
            <person name="Nagai K."/>
            <person name="Kimura K."/>
            <person name="Makita H."/>
            <person name="Sekine M."/>
            <person name="Obayashi M."/>
            <person name="Nishi T."/>
            <person name="Shibahara T."/>
            <person name="Tanaka T."/>
            <person name="Ishii S."/>
            <person name="Yamamoto J."/>
            <person name="Saito K."/>
            <person name="Kawai Y."/>
            <person name="Isono Y."/>
            <person name="Nakamura Y."/>
            <person name="Nagahari K."/>
            <person name="Murakami K."/>
            <person name="Yasuda T."/>
            <person name="Iwayanagi T."/>
            <person name="Wagatsuma M."/>
            <person name="Shiratori A."/>
            <person name="Sudo H."/>
            <person name="Hosoiri T."/>
            <person name="Kaku Y."/>
            <person name="Kodaira H."/>
            <person name="Kondo H."/>
            <person name="Sugawara M."/>
            <person name="Takahashi M."/>
            <person name="Kanda K."/>
            <person name="Yokoi T."/>
            <person name="Furuya T."/>
            <person name="Kikkawa E."/>
            <person name="Omura Y."/>
            <person name="Abe K."/>
            <person name="Kamihara K."/>
            <person name="Katsuta N."/>
            <person name="Sato K."/>
            <person name="Tanikawa M."/>
            <person name="Yamazaki M."/>
            <person name="Ninomiya K."/>
            <person name="Ishibashi T."/>
            <person name="Yamashita H."/>
            <person name="Murakawa K."/>
            <person name="Fujimori K."/>
            <person name="Tanai H."/>
            <person name="Kimata M."/>
            <person name="Watanabe M."/>
            <person name="Hiraoka S."/>
            <person name="Chiba Y."/>
            <person name="Ishida S."/>
            <person name="Ono Y."/>
            <person name="Takiguchi S."/>
            <person name="Watanabe S."/>
            <person name="Yosida M."/>
            <person name="Hotuta T."/>
            <person name="Kusano J."/>
            <person name="Kanehori K."/>
            <person name="Takahashi-Fujii A."/>
            <person name="Hara H."/>
            <person name="Tanase T.-O."/>
            <person name="Nomura Y."/>
            <person name="Togiya S."/>
            <person name="Komai F."/>
            <person name="Hara R."/>
            <person name="Takeuchi K."/>
            <person name="Arita M."/>
            <person name="Imose N."/>
            <person name="Musashino K."/>
            <person name="Yuuki H."/>
            <person name="Oshima A."/>
            <person name="Sasaki N."/>
            <person name="Aotsuka S."/>
            <person name="Yoshikawa Y."/>
            <person name="Matsunawa H."/>
            <person name="Ichihara T."/>
            <person name="Shiohata N."/>
            <person name="Sano S."/>
            <person name="Moriya S."/>
            <person name="Momiyama H."/>
            <person name="Satoh N."/>
            <person name="Takami S."/>
            <person name="Terashima Y."/>
            <person name="Suzuki O."/>
            <person name="Nakagawa S."/>
            <person name="Senoh A."/>
            <person name="Mizoguchi H."/>
            <person name="Goto Y."/>
            <person name="Shimizu F."/>
            <person name="Wakebe H."/>
            <person name="Hishigaki H."/>
            <person name="Watanabe T."/>
            <person name="Sugiyama A."/>
            <person name="Takemoto M."/>
            <person name="Kawakami B."/>
            <person name="Yamazaki M."/>
            <person name="Watanabe K."/>
            <person name="Kumagai A."/>
            <person name="Itakura S."/>
            <person name="Fukuzumi Y."/>
            <person name="Fujimori Y."/>
            <person name="Komiyama M."/>
            <person name="Tashiro H."/>
            <person name="Tanigami A."/>
            <person name="Fujiwara T."/>
            <person name="Ono T."/>
            <person name="Yamada K."/>
            <person name="Fujii Y."/>
            <person name="Ozaki K."/>
            <person name="Hirao M."/>
            <person name="Ohmori Y."/>
            <person name="Kawabata A."/>
            <person name="Hikiji T."/>
            <person name="Kobatake N."/>
            <person name="Inagaki H."/>
            <person name="Ikema Y."/>
            <person name="Okamoto S."/>
            <person name="Okitani R."/>
            <person name="Kawakami T."/>
            <person name="Noguchi S."/>
            <person name="Itoh T."/>
            <person name="Shigeta K."/>
            <person name="Senba T."/>
            <person name="Matsumura K."/>
            <person name="Nakajima Y."/>
            <person name="Mizuno T."/>
            <person name="Morinaga M."/>
            <person name="Sasaki M."/>
            <person name="Togashi T."/>
            <person name="Oyama M."/>
            <person name="Hata H."/>
            <person name="Watanabe M."/>
            <person name="Komatsu T."/>
            <person name="Mizushima-Sugano J."/>
            <person name="Satoh T."/>
            <person name="Shirai Y."/>
            <person name="Takahashi Y."/>
            <person name="Nakagawa K."/>
            <person name="Okumura K."/>
            <person name="Nagase T."/>
            <person name="Nomura N."/>
            <person name="Kikuchi H."/>
            <person name="Masuho Y."/>
            <person name="Yamashita R."/>
            <person name="Nakai K."/>
            <person name="Yada T."/>
            <person name="Nakamura Y."/>
            <person name="Ohara O."/>
            <person name="Isogai T."/>
            <person name="Sugano S."/>
        </authorList>
    </citation>
    <scope>NUCLEOTIDE SEQUENCE [LARGE SCALE MRNA] (ISOFORM 2)</scope>
    <source>
        <tissue>Testis</tissue>
    </source>
</reference>
<reference key="2">
    <citation type="journal article" date="2004" name="Nature">
        <title>The DNA sequence and biology of human chromosome 19.</title>
        <authorList>
            <person name="Grimwood J."/>
            <person name="Gordon L.A."/>
            <person name="Olsen A.S."/>
            <person name="Terry A."/>
            <person name="Schmutz J."/>
            <person name="Lamerdin J.E."/>
            <person name="Hellsten U."/>
            <person name="Goodstein D."/>
            <person name="Couronne O."/>
            <person name="Tran-Gyamfi M."/>
            <person name="Aerts A."/>
            <person name="Altherr M."/>
            <person name="Ashworth L."/>
            <person name="Bajorek E."/>
            <person name="Black S."/>
            <person name="Branscomb E."/>
            <person name="Caenepeel S."/>
            <person name="Carrano A.V."/>
            <person name="Caoile C."/>
            <person name="Chan Y.M."/>
            <person name="Christensen M."/>
            <person name="Cleland C.A."/>
            <person name="Copeland A."/>
            <person name="Dalin E."/>
            <person name="Dehal P."/>
            <person name="Denys M."/>
            <person name="Detter J.C."/>
            <person name="Escobar J."/>
            <person name="Flowers D."/>
            <person name="Fotopulos D."/>
            <person name="Garcia C."/>
            <person name="Georgescu A.M."/>
            <person name="Glavina T."/>
            <person name="Gomez M."/>
            <person name="Gonzales E."/>
            <person name="Groza M."/>
            <person name="Hammon N."/>
            <person name="Hawkins T."/>
            <person name="Haydu L."/>
            <person name="Ho I."/>
            <person name="Huang W."/>
            <person name="Israni S."/>
            <person name="Jett J."/>
            <person name="Kadner K."/>
            <person name="Kimball H."/>
            <person name="Kobayashi A."/>
            <person name="Larionov V."/>
            <person name="Leem S.-H."/>
            <person name="Lopez F."/>
            <person name="Lou Y."/>
            <person name="Lowry S."/>
            <person name="Malfatti S."/>
            <person name="Martinez D."/>
            <person name="McCready P.M."/>
            <person name="Medina C."/>
            <person name="Morgan J."/>
            <person name="Nelson K."/>
            <person name="Nolan M."/>
            <person name="Ovcharenko I."/>
            <person name="Pitluck S."/>
            <person name="Pollard M."/>
            <person name="Popkie A.P."/>
            <person name="Predki P."/>
            <person name="Quan G."/>
            <person name="Ramirez L."/>
            <person name="Rash S."/>
            <person name="Retterer J."/>
            <person name="Rodriguez A."/>
            <person name="Rogers S."/>
            <person name="Salamov A."/>
            <person name="Salazar A."/>
            <person name="She X."/>
            <person name="Smith D."/>
            <person name="Slezak T."/>
            <person name="Solovyev V."/>
            <person name="Thayer N."/>
            <person name="Tice H."/>
            <person name="Tsai M."/>
            <person name="Ustaszewska A."/>
            <person name="Vo N."/>
            <person name="Wagner M."/>
            <person name="Wheeler J."/>
            <person name="Wu K."/>
            <person name="Xie G."/>
            <person name="Yang J."/>
            <person name="Dubchak I."/>
            <person name="Furey T.S."/>
            <person name="DeJong P."/>
            <person name="Dickson M."/>
            <person name="Gordon D."/>
            <person name="Eichler E.E."/>
            <person name="Pennacchio L.A."/>
            <person name="Richardson P."/>
            <person name="Stubbs L."/>
            <person name="Rokhsar D.S."/>
            <person name="Myers R.M."/>
            <person name="Rubin E.M."/>
            <person name="Lucas S.M."/>
        </authorList>
    </citation>
    <scope>NUCLEOTIDE SEQUENCE [LARGE SCALE GENOMIC DNA]</scope>
</reference>
<reference key="3">
    <citation type="journal article" date="2004" name="Genome Res.">
        <title>The status, quality, and expansion of the NIH full-length cDNA project: the Mammalian Gene Collection (MGC).</title>
        <authorList>
            <consortium name="The MGC Project Team"/>
        </authorList>
    </citation>
    <scope>NUCLEOTIDE SEQUENCE [LARGE SCALE MRNA] (ISOFORM 2)</scope>
    <scope>VARIANT ARG-239</scope>
    <source>
        <tissue>Testis</tissue>
    </source>
</reference>
<feature type="chain" id="PRO_0000053896" description="Pleckstrin homology-like domain family B member 3">
    <location>
        <begin position="1"/>
        <end position="640"/>
    </location>
</feature>
<feature type="domain" description="PH" evidence="3">
    <location>
        <begin position="532"/>
        <end position="635"/>
    </location>
</feature>
<feature type="region of interest" description="Disordered" evidence="4">
    <location>
        <begin position="1"/>
        <end position="100"/>
    </location>
</feature>
<feature type="region of interest" description="Disordered" evidence="4">
    <location>
        <begin position="162"/>
        <end position="189"/>
    </location>
</feature>
<feature type="region of interest" description="Disordered" evidence="4">
    <location>
        <begin position="241"/>
        <end position="262"/>
    </location>
</feature>
<feature type="region of interest" description="Disordered" evidence="4">
    <location>
        <begin position="387"/>
        <end position="412"/>
    </location>
</feature>
<feature type="region of interest" description="Disordered" evidence="4">
    <location>
        <begin position="476"/>
        <end position="504"/>
    </location>
</feature>
<feature type="coiled-coil region" evidence="2">
    <location>
        <begin position="104"/>
        <end position="327"/>
    </location>
</feature>
<feature type="coiled-coil region" evidence="2">
    <location>
        <begin position="454"/>
        <end position="481"/>
    </location>
</feature>
<feature type="compositionally biased region" description="Low complexity" evidence="4">
    <location>
        <begin position="76"/>
        <end position="90"/>
    </location>
</feature>
<feature type="compositionally biased region" description="Basic and acidic residues" evidence="4">
    <location>
        <begin position="170"/>
        <end position="189"/>
    </location>
</feature>
<feature type="compositionally biased region" description="Pro residues" evidence="4">
    <location>
        <begin position="495"/>
        <end position="504"/>
    </location>
</feature>
<feature type="splice variant" id="VSP_039923" description="In isoform 2." evidence="6 7">
    <original>RGAL</original>
    <variation>VSHA</variation>
    <location>
        <begin position="276"/>
        <end position="279"/>
    </location>
</feature>
<feature type="splice variant" id="VSP_039924" description="In isoform 2." evidence="6 7">
    <location>
        <begin position="280"/>
        <end position="640"/>
    </location>
</feature>
<feature type="sequence variant" id="VAR_056671" description="In dbSNP:rs11083711." evidence="5">
    <original>Q</original>
    <variation>R</variation>
    <location>
        <position position="239"/>
    </location>
</feature>
<protein>
    <recommendedName>
        <fullName>Pleckstrin homology-like domain family B member 3</fullName>
    </recommendedName>
</protein>
<gene>
    <name type="primary">PHLDB3</name>
</gene>
<comment type="interaction">
    <interactant intactId="EBI-11018958">
        <id>Q6NSJ2-2</id>
    </interactant>
    <interactant intactId="EBI-11984237">
        <id>Q9Y3Y2-3</id>
        <label>CHTOP</label>
    </interactant>
    <organismsDiffer>false</organismsDiffer>
    <experiments>3</experiments>
</comment>
<comment type="interaction">
    <interactant intactId="EBI-11018958">
        <id>Q6NSJ2-2</id>
    </interactant>
    <interactant intactId="EBI-355607">
        <id>P06753</id>
        <label>TPM3</label>
    </interactant>
    <organismsDiffer>false</organismsDiffer>
    <experiments>3</experiments>
</comment>
<comment type="alternative products">
    <event type="alternative splicing"/>
    <isoform>
        <id>Q6NSJ2-1</id>
        <name>1</name>
        <sequence type="displayed"/>
    </isoform>
    <isoform>
        <id>Q6NSJ2-2</id>
        <name>2</name>
        <sequence type="described" ref="VSP_039923 VSP_039924"/>
    </isoform>
</comment>
<comment type="domain">
    <text evidence="1">The PH domain mediates the binding to phosphoinositides.</text>
</comment>
<comment type="sequence caution" evidence="8">
    <conflict type="erroneous termination">
        <sequence resource="EMBL-CDS" id="BAC05082"/>
    </conflict>
    <text>Truncated C-terminus.</text>
</comment>
<name>PHLB3_HUMAN</name>
<organism>
    <name type="scientific">Homo sapiens</name>
    <name type="common">Human</name>
    <dbReference type="NCBI Taxonomy" id="9606"/>
    <lineage>
        <taxon>Eukaryota</taxon>
        <taxon>Metazoa</taxon>
        <taxon>Chordata</taxon>
        <taxon>Craniata</taxon>
        <taxon>Vertebrata</taxon>
        <taxon>Euteleostomi</taxon>
        <taxon>Mammalia</taxon>
        <taxon>Eutheria</taxon>
        <taxon>Euarchontoglires</taxon>
        <taxon>Primates</taxon>
        <taxon>Haplorrhini</taxon>
        <taxon>Catarrhini</taxon>
        <taxon>Hominidae</taxon>
        <taxon>Homo</taxon>
    </lineage>
</organism>